<accession>C0ZII0</accession>
<gene>
    <name evidence="1" type="primary">rplC</name>
    <name type="ordered locus">BBR47_02210</name>
</gene>
<sequence length="209" mass="22308">MTKGILGKKLGMTQVFGPNGTATAVTVIEVGSNVVLQKKDVETDGYEAIQIGFEDKKEQRANKPEKGHAAKANTAPKRFIREIRGVNLADYEVGQELKADIFAEGEMVDVAGVSKGKGFQGAIKRHNQSRGPMAHGSRYHRGPGSMGAVAPNRVFKGQTLPGQMGGDNVTIQNLEVIKVDTERNLVLVKGSVPGPKNSCVLVSTAVKKN</sequence>
<comment type="function">
    <text evidence="1">One of the primary rRNA binding proteins, it binds directly near the 3'-end of the 23S rRNA, where it nucleates assembly of the 50S subunit.</text>
</comment>
<comment type="subunit">
    <text evidence="1">Part of the 50S ribosomal subunit. Forms a cluster with proteins L14 and L19.</text>
</comment>
<comment type="similarity">
    <text evidence="1">Belongs to the universal ribosomal protein uL3 family.</text>
</comment>
<organism>
    <name type="scientific">Brevibacillus brevis (strain 47 / JCM 6285 / NBRC 100599)</name>
    <dbReference type="NCBI Taxonomy" id="358681"/>
    <lineage>
        <taxon>Bacteria</taxon>
        <taxon>Bacillati</taxon>
        <taxon>Bacillota</taxon>
        <taxon>Bacilli</taxon>
        <taxon>Bacillales</taxon>
        <taxon>Paenibacillaceae</taxon>
        <taxon>Brevibacillus</taxon>
    </lineage>
</organism>
<keyword id="KW-1185">Reference proteome</keyword>
<keyword id="KW-0687">Ribonucleoprotein</keyword>
<keyword id="KW-0689">Ribosomal protein</keyword>
<keyword id="KW-0694">RNA-binding</keyword>
<keyword id="KW-0699">rRNA-binding</keyword>
<dbReference type="EMBL" id="AP008955">
    <property type="protein sequence ID" value="BAH41198.1"/>
    <property type="molecule type" value="Genomic_DNA"/>
</dbReference>
<dbReference type="RefSeq" id="WP_012683983.1">
    <property type="nucleotide sequence ID" value="NC_012491.1"/>
</dbReference>
<dbReference type="SMR" id="C0ZII0"/>
<dbReference type="STRING" id="358681.BBR47_02210"/>
<dbReference type="GeneID" id="87588871"/>
<dbReference type="KEGG" id="bbe:BBR47_02210"/>
<dbReference type="eggNOG" id="COG0087">
    <property type="taxonomic scope" value="Bacteria"/>
</dbReference>
<dbReference type="HOGENOM" id="CLU_044142_4_1_9"/>
<dbReference type="Proteomes" id="UP000001877">
    <property type="component" value="Chromosome"/>
</dbReference>
<dbReference type="GO" id="GO:0022625">
    <property type="term" value="C:cytosolic large ribosomal subunit"/>
    <property type="evidence" value="ECO:0007669"/>
    <property type="project" value="TreeGrafter"/>
</dbReference>
<dbReference type="GO" id="GO:0019843">
    <property type="term" value="F:rRNA binding"/>
    <property type="evidence" value="ECO:0007669"/>
    <property type="project" value="UniProtKB-UniRule"/>
</dbReference>
<dbReference type="GO" id="GO:0003735">
    <property type="term" value="F:structural constituent of ribosome"/>
    <property type="evidence" value="ECO:0007669"/>
    <property type="project" value="InterPro"/>
</dbReference>
<dbReference type="GO" id="GO:0006412">
    <property type="term" value="P:translation"/>
    <property type="evidence" value="ECO:0007669"/>
    <property type="project" value="UniProtKB-UniRule"/>
</dbReference>
<dbReference type="FunFam" id="2.40.30.10:FF:000004">
    <property type="entry name" value="50S ribosomal protein L3"/>
    <property type="match status" value="1"/>
</dbReference>
<dbReference type="FunFam" id="3.30.160.810:FF:000002">
    <property type="entry name" value="50S ribosomal protein L3"/>
    <property type="match status" value="1"/>
</dbReference>
<dbReference type="Gene3D" id="3.30.160.810">
    <property type="match status" value="1"/>
</dbReference>
<dbReference type="Gene3D" id="2.40.30.10">
    <property type="entry name" value="Translation factors"/>
    <property type="match status" value="1"/>
</dbReference>
<dbReference type="HAMAP" id="MF_01325_B">
    <property type="entry name" value="Ribosomal_uL3_B"/>
    <property type="match status" value="1"/>
</dbReference>
<dbReference type="InterPro" id="IPR000597">
    <property type="entry name" value="Ribosomal_uL3"/>
</dbReference>
<dbReference type="InterPro" id="IPR019927">
    <property type="entry name" value="Ribosomal_uL3_bac/org-type"/>
</dbReference>
<dbReference type="InterPro" id="IPR019926">
    <property type="entry name" value="Ribosomal_uL3_CS"/>
</dbReference>
<dbReference type="InterPro" id="IPR009000">
    <property type="entry name" value="Transl_B-barrel_sf"/>
</dbReference>
<dbReference type="NCBIfam" id="TIGR03625">
    <property type="entry name" value="L3_bact"/>
    <property type="match status" value="1"/>
</dbReference>
<dbReference type="PANTHER" id="PTHR11229">
    <property type="entry name" value="50S RIBOSOMAL PROTEIN L3"/>
    <property type="match status" value="1"/>
</dbReference>
<dbReference type="PANTHER" id="PTHR11229:SF16">
    <property type="entry name" value="LARGE RIBOSOMAL SUBUNIT PROTEIN UL3C"/>
    <property type="match status" value="1"/>
</dbReference>
<dbReference type="Pfam" id="PF00297">
    <property type="entry name" value="Ribosomal_L3"/>
    <property type="match status" value="1"/>
</dbReference>
<dbReference type="SUPFAM" id="SSF50447">
    <property type="entry name" value="Translation proteins"/>
    <property type="match status" value="1"/>
</dbReference>
<dbReference type="PROSITE" id="PS00474">
    <property type="entry name" value="RIBOSOMAL_L3"/>
    <property type="match status" value="1"/>
</dbReference>
<protein>
    <recommendedName>
        <fullName evidence="1">Large ribosomal subunit protein uL3</fullName>
    </recommendedName>
    <alternativeName>
        <fullName evidence="2">50S ribosomal protein L3</fullName>
    </alternativeName>
</protein>
<name>RL3_BREBN</name>
<feature type="chain" id="PRO_1000165871" description="Large ribosomal subunit protein uL3">
    <location>
        <begin position="1"/>
        <end position="209"/>
    </location>
</feature>
<proteinExistence type="inferred from homology"/>
<reference key="1">
    <citation type="submission" date="2005-03" db="EMBL/GenBank/DDBJ databases">
        <title>Brevibacillus brevis strain 47, complete genome.</title>
        <authorList>
            <person name="Hosoyama A."/>
            <person name="Yamada R."/>
            <person name="Hongo Y."/>
            <person name="Terui Y."/>
            <person name="Ankai A."/>
            <person name="Masuyama W."/>
            <person name="Sekiguchi M."/>
            <person name="Takeda T."/>
            <person name="Asano K."/>
            <person name="Ohji S."/>
            <person name="Ichikawa N."/>
            <person name="Narita S."/>
            <person name="Aoki N."/>
            <person name="Miura H."/>
            <person name="Matsushita S."/>
            <person name="Sekigawa T."/>
            <person name="Yamagata H."/>
            <person name="Yoshikawa H."/>
            <person name="Udaka S."/>
            <person name="Tanikawa S."/>
            <person name="Fujita N."/>
        </authorList>
    </citation>
    <scope>NUCLEOTIDE SEQUENCE [LARGE SCALE GENOMIC DNA]</scope>
    <source>
        <strain>47 / JCM 6285 / NBRC 100599</strain>
    </source>
</reference>
<evidence type="ECO:0000255" key="1">
    <source>
        <dbReference type="HAMAP-Rule" id="MF_01325"/>
    </source>
</evidence>
<evidence type="ECO:0000305" key="2"/>